<name>CH60_YERPB</name>
<protein>
    <recommendedName>
        <fullName evidence="1">Chaperonin GroEL</fullName>
        <ecNumber evidence="1">5.6.1.7</ecNumber>
    </recommendedName>
    <alternativeName>
        <fullName evidence="1">60 kDa chaperonin</fullName>
    </alternativeName>
    <alternativeName>
        <fullName evidence="1">Chaperonin-60</fullName>
        <shortName evidence="1">Cpn60</shortName>
    </alternativeName>
</protein>
<proteinExistence type="inferred from homology"/>
<sequence length="548" mass="57431">MAAKDVKFGNDARIKMLRGVNILADAVKVTLGPKGRNVVLDKSFGSPTITKDGVSVAREIELEDKFENMGAQMVKEVASKANDAAGDGTTTATVLAQSIITEGLKAVAAGMNPMDLKRGIDKAVIAAVEELKKLSVPCSDSKAIAQVGTISANSDSTVGELIAQAMEKVGKEGVITVEEGSGLQDELDVVEGMQFDRGYLSPYFINKPETGSIELESPFILLADKKISNIREMLPVLEAVAKAGKPLLIIAEDVEGEALATLVVNTMRGIVKVAAVKAPGFGDRRKAMLQDIATLTAGTVISEEIGLELEKTTLEDLGQAKRVVINKDTTIIIDGVGDEAAIQGRVAQIRQQIEDATSDYDKEKLQERVAKLAGGVAVIKVGAATEVEMKEKKARVEDALHATRAAVEEGVVAGGGVALIRAAHAIAGLKGDNEDQNVGIKVALRAMESPLRQIVVNAGEEASVIANKVKAGEGSFGYNAYTEEYGDMIAMGILDPTKVTRSALQYAASIAGLMITTECMVTDLPRDDKGADMGAGGMGGMGGMGGMM</sequence>
<gene>
    <name evidence="1" type="primary">groEL</name>
    <name evidence="1" type="synonym">groL</name>
    <name type="ordered locus">YPTS_0431</name>
</gene>
<feature type="chain" id="PRO_1000130082" description="Chaperonin GroEL">
    <location>
        <begin position="1"/>
        <end position="548"/>
    </location>
</feature>
<feature type="binding site" evidence="1">
    <location>
        <begin position="30"/>
        <end position="33"/>
    </location>
    <ligand>
        <name>ATP</name>
        <dbReference type="ChEBI" id="CHEBI:30616"/>
    </ligand>
</feature>
<feature type="binding site" evidence="1">
    <location>
        <position position="51"/>
    </location>
    <ligand>
        <name>ATP</name>
        <dbReference type="ChEBI" id="CHEBI:30616"/>
    </ligand>
</feature>
<feature type="binding site" evidence="1">
    <location>
        <begin position="87"/>
        <end position="91"/>
    </location>
    <ligand>
        <name>ATP</name>
        <dbReference type="ChEBI" id="CHEBI:30616"/>
    </ligand>
</feature>
<feature type="binding site" evidence="1">
    <location>
        <position position="415"/>
    </location>
    <ligand>
        <name>ATP</name>
        <dbReference type="ChEBI" id="CHEBI:30616"/>
    </ligand>
</feature>
<feature type="binding site" evidence="1">
    <location>
        <position position="495"/>
    </location>
    <ligand>
        <name>ATP</name>
        <dbReference type="ChEBI" id="CHEBI:30616"/>
    </ligand>
</feature>
<keyword id="KW-0067">ATP-binding</keyword>
<keyword id="KW-0143">Chaperone</keyword>
<keyword id="KW-0963">Cytoplasm</keyword>
<keyword id="KW-0413">Isomerase</keyword>
<keyword id="KW-0547">Nucleotide-binding</keyword>
<evidence type="ECO:0000255" key="1">
    <source>
        <dbReference type="HAMAP-Rule" id="MF_00600"/>
    </source>
</evidence>
<comment type="function">
    <text evidence="1">Together with its co-chaperonin GroES, plays an essential role in assisting protein folding. The GroEL-GroES system forms a nano-cage that allows encapsulation of the non-native substrate proteins and provides a physical environment optimized to promote and accelerate protein folding.</text>
</comment>
<comment type="catalytic activity">
    <reaction evidence="1">
        <text>ATP + H2O + a folded polypeptide = ADP + phosphate + an unfolded polypeptide.</text>
        <dbReference type="EC" id="5.6.1.7"/>
    </reaction>
</comment>
<comment type="subunit">
    <text evidence="1">Forms a cylinder of 14 subunits composed of two heptameric rings stacked back-to-back. Interacts with the co-chaperonin GroES.</text>
</comment>
<comment type="subcellular location">
    <subcellularLocation>
        <location evidence="1">Cytoplasm</location>
    </subcellularLocation>
</comment>
<comment type="similarity">
    <text evidence="1">Belongs to the chaperonin (HSP60) family.</text>
</comment>
<organism>
    <name type="scientific">Yersinia pseudotuberculosis serotype IB (strain PB1/+)</name>
    <dbReference type="NCBI Taxonomy" id="502801"/>
    <lineage>
        <taxon>Bacteria</taxon>
        <taxon>Pseudomonadati</taxon>
        <taxon>Pseudomonadota</taxon>
        <taxon>Gammaproteobacteria</taxon>
        <taxon>Enterobacterales</taxon>
        <taxon>Yersiniaceae</taxon>
        <taxon>Yersinia</taxon>
    </lineage>
</organism>
<dbReference type="EC" id="5.6.1.7" evidence="1"/>
<dbReference type="EMBL" id="CP001048">
    <property type="protein sequence ID" value="ACC87419.1"/>
    <property type="molecule type" value="Genomic_DNA"/>
</dbReference>
<dbReference type="RefSeq" id="WP_002209128.1">
    <property type="nucleotide sequence ID" value="NZ_CP009780.1"/>
</dbReference>
<dbReference type="SMR" id="B2K1Y4"/>
<dbReference type="GeneID" id="57974257"/>
<dbReference type="KEGG" id="ypb:YPTS_0431"/>
<dbReference type="PATRIC" id="fig|502801.10.peg.4106"/>
<dbReference type="GO" id="GO:0005737">
    <property type="term" value="C:cytoplasm"/>
    <property type="evidence" value="ECO:0007669"/>
    <property type="project" value="UniProtKB-SubCell"/>
</dbReference>
<dbReference type="GO" id="GO:0005524">
    <property type="term" value="F:ATP binding"/>
    <property type="evidence" value="ECO:0007669"/>
    <property type="project" value="UniProtKB-UniRule"/>
</dbReference>
<dbReference type="GO" id="GO:0140662">
    <property type="term" value="F:ATP-dependent protein folding chaperone"/>
    <property type="evidence" value="ECO:0007669"/>
    <property type="project" value="InterPro"/>
</dbReference>
<dbReference type="GO" id="GO:0016853">
    <property type="term" value="F:isomerase activity"/>
    <property type="evidence" value="ECO:0007669"/>
    <property type="project" value="UniProtKB-KW"/>
</dbReference>
<dbReference type="GO" id="GO:0051082">
    <property type="term" value="F:unfolded protein binding"/>
    <property type="evidence" value="ECO:0007669"/>
    <property type="project" value="UniProtKB-UniRule"/>
</dbReference>
<dbReference type="GO" id="GO:0042026">
    <property type="term" value="P:protein refolding"/>
    <property type="evidence" value="ECO:0007669"/>
    <property type="project" value="UniProtKB-UniRule"/>
</dbReference>
<dbReference type="CDD" id="cd03344">
    <property type="entry name" value="GroEL"/>
    <property type="match status" value="1"/>
</dbReference>
<dbReference type="FunFam" id="1.10.560.10:FF:000001">
    <property type="entry name" value="60 kDa chaperonin"/>
    <property type="match status" value="1"/>
</dbReference>
<dbReference type="FunFam" id="3.50.7.10:FF:000001">
    <property type="entry name" value="60 kDa chaperonin"/>
    <property type="match status" value="1"/>
</dbReference>
<dbReference type="Gene3D" id="3.50.7.10">
    <property type="entry name" value="GroEL"/>
    <property type="match status" value="1"/>
</dbReference>
<dbReference type="Gene3D" id="1.10.560.10">
    <property type="entry name" value="GroEL-like equatorial domain"/>
    <property type="match status" value="1"/>
</dbReference>
<dbReference type="Gene3D" id="3.30.260.10">
    <property type="entry name" value="TCP-1-like chaperonin intermediate domain"/>
    <property type="match status" value="1"/>
</dbReference>
<dbReference type="HAMAP" id="MF_00600">
    <property type="entry name" value="CH60"/>
    <property type="match status" value="1"/>
</dbReference>
<dbReference type="InterPro" id="IPR018370">
    <property type="entry name" value="Chaperonin_Cpn60_CS"/>
</dbReference>
<dbReference type="InterPro" id="IPR001844">
    <property type="entry name" value="Cpn60/GroEL"/>
</dbReference>
<dbReference type="InterPro" id="IPR002423">
    <property type="entry name" value="Cpn60/GroEL/TCP-1"/>
</dbReference>
<dbReference type="InterPro" id="IPR027409">
    <property type="entry name" value="GroEL-like_apical_dom_sf"/>
</dbReference>
<dbReference type="InterPro" id="IPR027413">
    <property type="entry name" value="GROEL-like_equatorial_sf"/>
</dbReference>
<dbReference type="InterPro" id="IPR027410">
    <property type="entry name" value="TCP-1-like_intermed_sf"/>
</dbReference>
<dbReference type="NCBIfam" id="TIGR02348">
    <property type="entry name" value="GroEL"/>
    <property type="match status" value="1"/>
</dbReference>
<dbReference type="NCBIfam" id="NF000592">
    <property type="entry name" value="PRK00013.1"/>
    <property type="match status" value="1"/>
</dbReference>
<dbReference type="NCBIfam" id="NF009487">
    <property type="entry name" value="PRK12849.1"/>
    <property type="match status" value="1"/>
</dbReference>
<dbReference type="NCBIfam" id="NF009488">
    <property type="entry name" value="PRK12850.1"/>
    <property type="match status" value="1"/>
</dbReference>
<dbReference type="NCBIfam" id="NF009489">
    <property type="entry name" value="PRK12851.1"/>
    <property type="match status" value="1"/>
</dbReference>
<dbReference type="PANTHER" id="PTHR45633">
    <property type="entry name" value="60 KDA HEAT SHOCK PROTEIN, MITOCHONDRIAL"/>
    <property type="match status" value="1"/>
</dbReference>
<dbReference type="Pfam" id="PF00118">
    <property type="entry name" value="Cpn60_TCP1"/>
    <property type="match status" value="1"/>
</dbReference>
<dbReference type="PRINTS" id="PR00298">
    <property type="entry name" value="CHAPERONIN60"/>
</dbReference>
<dbReference type="SUPFAM" id="SSF52029">
    <property type="entry name" value="GroEL apical domain-like"/>
    <property type="match status" value="1"/>
</dbReference>
<dbReference type="SUPFAM" id="SSF48592">
    <property type="entry name" value="GroEL equatorial domain-like"/>
    <property type="match status" value="1"/>
</dbReference>
<dbReference type="SUPFAM" id="SSF54849">
    <property type="entry name" value="GroEL-intermediate domain like"/>
    <property type="match status" value="1"/>
</dbReference>
<dbReference type="PROSITE" id="PS00296">
    <property type="entry name" value="CHAPERONINS_CPN60"/>
    <property type="match status" value="1"/>
</dbReference>
<reference key="1">
    <citation type="submission" date="2008-04" db="EMBL/GenBank/DDBJ databases">
        <title>Complete sequence of Yersinia pseudotuberculosis PB1/+.</title>
        <authorList>
            <person name="Copeland A."/>
            <person name="Lucas S."/>
            <person name="Lapidus A."/>
            <person name="Glavina del Rio T."/>
            <person name="Dalin E."/>
            <person name="Tice H."/>
            <person name="Bruce D."/>
            <person name="Goodwin L."/>
            <person name="Pitluck S."/>
            <person name="Munk A.C."/>
            <person name="Brettin T."/>
            <person name="Detter J.C."/>
            <person name="Han C."/>
            <person name="Tapia R."/>
            <person name="Schmutz J."/>
            <person name="Larimer F."/>
            <person name="Land M."/>
            <person name="Hauser L."/>
            <person name="Challacombe J.F."/>
            <person name="Green L."/>
            <person name="Lindler L.E."/>
            <person name="Nikolich M.P."/>
            <person name="Richardson P."/>
        </authorList>
    </citation>
    <scope>NUCLEOTIDE SEQUENCE [LARGE SCALE GENOMIC DNA]</scope>
    <source>
        <strain>PB1/+</strain>
    </source>
</reference>
<accession>B2K1Y4</accession>